<gene>
    <name evidence="1" type="primary">rutF</name>
    <name type="ordered locus">KPK_3525</name>
</gene>
<name>RUTF_KLEP3</name>
<accession>B5XXN5</accession>
<feature type="chain" id="PRO_0000403028" description="FMN reductase (NADH) RutF">
    <location>
        <begin position="1"/>
        <end position="164"/>
    </location>
</feature>
<reference key="1">
    <citation type="journal article" date="2008" name="PLoS Genet.">
        <title>Complete genome sequence of the N2-fixing broad host range endophyte Klebsiella pneumoniae 342 and virulence predictions verified in mice.</title>
        <authorList>
            <person name="Fouts D.E."/>
            <person name="Tyler H.L."/>
            <person name="DeBoy R.T."/>
            <person name="Daugherty S."/>
            <person name="Ren Q."/>
            <person name="Badger J.H."/>
            <person name="Durkin A.S."/>
            <person name="Huot H."/>
            <person name="Shrivastava S."/>
            <person name="Kothari S."/>
            <person name="Dodson R.J."/>
            <person name="Mohamoud Y."/>
            <person name="Khouri H."/>
            <person name="Roesch L.F.W."/>
            <person name="Krogfelt K.A."/>
            <person name="Struve C."/>
            <person name="Triplett E.W."/>
            <person name="Methe B.A."/>
        </authorList>
    </citation>
    <scope>NUCLEOTIDE SEQUENCE [LARGE SCALE GENOMIC DNA]</scope>
    <source>
        <strain>342</strain>
    </source>
</reference>
<sequence length="164" mass="17546">MELADKASFRDAMAHVGAAVNIITTDGPAGRAGFTASAVCSVTDTPPTLLVCLNRSASVWPVFSEHHTLCVNTLAAGQEALSTLFGGKTAMDERFAAADWQTGATGCPRLEAALVSFDCRIDQRVSVGTHDILFCHVVAITRHPEPRGLMWFGRGYHTLMRPAC</sequence>
<proteinExistence type="inferred from homology"/>
<comment type="function">
    <text evidence="1">Catalyzes the reduction of FMN to FMNH2 which is used to reduce pyrimidine by RutA via the Rut pathway.</text>
</comment>
<comment type="catalytic activity">
    <reaction evidence="1">
        <text>FMNH2 + NAD(+) = FMN + NADH + 2 H(+)</text>
        <dbReference type="Rhea" id="RHEA:21620"/>
        <dbReference type="ChEBI" id="CHEBI:15378"/>
        <dbReference type="ChEBI" id="CHEBI:57540"/>
        <dbReference type="ChEBI" id="CHEBI:57618"/>
        <dbReference type="ChEBI" id="CHEBI:57945"/>
        <dbReference type="ChEBI" id="CHEBI:58210"/>
        <dbReference type="EC" id="1.5.1.42"/>
    </reaction>
</comment>
<comment type="similarity">
    <text evidence="1">Belongs to the non-flavoprotein flavin reductase family. RutF subfamily.</text>
</comment>
<dbReference type="EC" id="1.5.1.42" evidence="1"/>
<dbReference type="EMBL" id="CP000964">
    <property type="protein sequence ID" value="ACI10535.1"/>
    <property type="molecule type" value="Genomic_DNA"/>
</dbReference>
<dbReference type="SMR" id="B5XXN5"/>
<dbReference type="KEGG" id="kpe:KPK_3525"/>
<dbReference type="HOGENOM" id="CLU_059021_2_2_6"/>
<dbReference type="Proteomes" id="UP000001734">
    <property type="component" value="Chromosome"/>
</dbReference>
<dbReference type="GO" id="GO:0010181">
    <property type="term" value="F:FMN binding"/>
    <property type="evidence" value="ECO:0007669"/>
    <property type="project" value="InterPro"/>
</dbReference>
<dbReference type="GO" id="GO:0052874">
    <property type="term" value="F:FMN reductase (NADH) activity"/>
    <property type="evidence" value="ECO:0007669"/>
    <property type="project" value="UniProtKB-EC"/>
</dbReference>
<dbReference type="GO" id="GO:0008752">
    <property type="term" value="F:FMN reductase [NAD(P)H] activity"/>
    <property type="evidence" value="ECO:0007669"/>
    <property type="project" value="InterPro"/>
</dbReference>
<dbReference type="GO" id="GO:0042602">
    <property type="term" value="F:riboflavin reductase (NADPH) activity"/>
    <property type="evidence" value="ECO:0007669"/>
    <property type="project" value="UniProtKB-UniRule"/>
</dbReference>
<dbReference type="GO" id="GO:0019740">
    <property type="term" value="P:nitrogen utilization"/>
    <property type="evidence" value="ECO:0007669"/>
    <property type="project" value="UniProtKB-UniRule"/>
</dbReference>
<dbReference type="GO" id="GO:0006212">
    <property type="term" value="P:uracil catabolic process"/>
    <property type="evidence" value="ECO:0007669"/>
    <property type="project" value="UniProtKB-UniRule"/>
</dbReference>
<dbReference type="FunFam" id="2.30.110.10:FF:000002">
    <property type="entry name" value="FMN reductase (NADH) RutF"/>
    <property type="match status" value="1"/>
</dbReference>
<dbReference type="Gene3D" id="2.30.110.10">
    <property type="entry name" value="Electron Transport, Fmn-binding Protein, Chain A"/>
    <property type="match status" value="1"/>
</dbReference>
<dbReference type="HAMAP" id="MF_00833">
    <property type="entry name" value="RutF"/>
    <property type="match status" value="1"/>
</dbReference>
<dbReference type="InterPro" id="IPR002563">
    <property type="entry name" value="Flavin_Rdtase-like_dom"/>
</dbReference>
<dbReference type="InterPro" id="IPR050268">
    <property type="entry name" value="NADH-dep_flavin_reductase"/>
</dbReference>
<dbReference type="InterPro" id="IPR019917">
    <property type="entry name" value="RutF"/>
</dbReference>
<dbReference type="InterPro" id="IPR012349">
    <property type="entry name" value="Split_barrel_FMN-bd"/>
</dbReference>
<dbReference type="NCBIfam" id="TIGR03615">
    <property type="entry name" value="RutF"/>
    <property type="match status" value="1"/>
</dbReference>
<dbReference type="PANTHER" id="PTHR30466">
    <property type="entry name" value="FLAVIN REDUCTASE"/>
    <property type="match status" value="1"/>
</dbReference>
<dbReference type="PANTHER" id="PTHR30466:SF1">
    <property type="entry name" value="FMN REDUCTASE (NADH) RUTF"/>
    <property type="match status" value="1"/>
</dbReference>
<dbReference type="Pfam" id="PF01613">
    <property type="entry name" value="Flavin_Reduct"/>
    <property type="match status" value="1"/>
</dbReference>
<dbReference type="SMART" id="SM00903">
    <property type="entry name" value="Flavin_Reduct"/>
    <property type="match status" value="1"/>
</dbReference>
<dbReference type="SUPFAM" id="SSF50475">
    <property type="entry name" value="FMN-binding split barrel"/>
    <property type="match status" value="1"/>
</dbReference>
<organism>
    <name type="scientific">Klebsiella pneumoniae (strain 342)</name>
    <dbReference type="NCBI Taxonomy" id="507522"/>
    <lineage>
        <taxon>Bacteria</taxon>
        <taxon>Pseudomonadati</taxon>
        <taxon>Pseudomonadota</taxon>
        <taxon>Gammaproteobacteria</taxon>
        <taxon>Enterobacterales</taxon>
        <taxon>Enterobacteriaceae</taxon>
        <taxon>Klebsiella/Raoultella group</taxon>
        <taxon>Klebsiella</taxon>
        <taxon>Klebsiella pneumoniae complex</taxon>
    </lineage>
</organism>
<protein>
    <recommendedName>
        <fullName evidence="1">FMN reductase (NADH) RutF</fullName>
        <ecNumber evidence="1">1.5.1.42</ecNumber>
    </recommendedName>
    <alternativeName>
        <fullName evidence="1">FMN reductase</fullName>
    </alternativeName>
    <alternativeName>
        <fullName evidence="1">NADH-flavin reductase RutF</fullName>
    </alternativeName>
    <alternativeName>
        <fullName evidence="1">NADH:flavin oxidoreductase</fullName>
    </alternativeName>
</protein>
<evidence type="ECO:0000255" key="1">
    <source>
        <dbReference type="HAMAP-Rule" id="MF_00833"/>
    </source>
</evidence>
<keyword id="KW-0285">Flavoprotein</keyword>
<keyword id="KW-0288">FMN</keyword>
<keyword id="KW-0520">NAD</keyword>
<keyword id="KW-0560">Oxidoreductase</keyword>